<protein>
    <recommendedName>
        <fullName evidence="1">Probable tRNA sulfurtransferase</fullName>
        <ecNumber evidence="1">2.8.1.4</ecNumber>
    </recommendedName>
    <alternativeName>
        <fullName evidence="1">Sulfur carrier protein ThiS sulfurtransferase</fullName>
    </alternativeName>
    <alternativeName>
        <fullName evidence="1">Thiamine biosynthesis protein ThiI</fullName>
    </alternativeName>
    <alternativeName>
        <fullName evidence="1">tRNA 4-thiouridine synthase</fullName>
    </alternativeName>
</protein>
<keyword id="KW-0067">ATP-binding</keyword>
<keyword id="KW-0963">Cytoplasm</keyword>
<keyword id="KW-0547">Nucleotide-binding</keyword>
<keyword id="KW-1185">Reference proteome</keyword>
<keyword id="KW-0694">RNA-binding</keyword>
<keyword id="KW-0784">Thiamine biosynthesis</keyword>
<keyword id="KW-0808">Transferase</keyword>
<keyword id="KW-0820">tRNA-binding</keyword>
<evidence type="ECO:0000255" key="1">
    <source>
        <dbReference type="HAMAP-Rule" id="MF_00021"/>
    </source>
</evidence>
<organism>
    <name type="scientific">Methanocaldococcus jannaschii (strain ATCC 43067 / DSM 2661 / JAL-1 / JCM 10045 / NBRC 100440)</name>
    <name type="common">Methanococcus jannaschii</name>
    <dbReference type="NCBI Taxonomy" id="243232"/>
    <lineage>
        <taxon>Archaea</taxon>
        <taxon>Methanobacteriati</taxon>
        <taxon>Methanobacteriota</taxon>
        <taxon>Methanomada group</taxon>
        <taxon>Methanococci</taxon>
        <taxon>Methanococcales</taxon>
        <taxon>Methanocaldococcaceae</taxon>
        <taxon>Methanocaldococcus</taxon>
    </lineage>
</organism>
<sequence>MKKLKVSKMEILVRYGEIGLKSDPIRKNLEEILRKNIIKLLRKYEIDAEVKILHRKLLVKINTKDKEDLALKLLKKVAGIVSYSPVYECPLDINEIVSFAVQIMKKKLKTLNKEKVTFAVKTKRSYKKFPFTSVEVNKKVGEAIVEKLGLEVDLENPDIVLGIEILNDGAYIFTEKYEGIGGLPAGSQGKVLCLISDGIDSPVAAFMMIRRGCRAVLLHLKMSEEALNKVRKIVEVLSDYDTELEFVVYDYKKDIEDIVEKLKSIKKENYTCIFCKRKMLKVAEKYAKYLDCDAIVTGDNLGQVASQTLKNLRVISENINYPILRPLIGLDKNDIVKIAKEIGTYEISTEKEIKCPYLPKHPKTIAKPEEVKKIKEKVKLV</sequence>
<accession>Q58341</accession>
<reference key="1">
    <citation type="journal article" date="1996" name="Science">
        <title>Complete genome sequence of the methanogenic archaeon, Methanococcus jannaschii.</title>
        <authorList>
            <person name="Bult C.J."/>
            <person name="White O."/>
            <person name="Olsen G.J."/>
            <person name="Zhou L."/>
            <person name="Fleischmann R.D."/>
            <person name="Sutton G.G."/>
            <person name="Blake J.A."/>
            <person name="FitzGerald L.M."/>
            <person name="Clayton R.A."/>
            <person name="Gocayne J.D."/>
            <person name="Kerlavage A.R."/>
            <person name="Dougherty B.A."/>
            <person name="Tomb J.-F."/>
            <person name="Adams M.D."/>
            <person name="Reich C.I."/>
            <person name="Overbeek R."/>
            <person name="Kirkness E.F."/>
            <person name="Weinstock K.G."/>
            <person name="Merrick J.M."/>
            <person name="Glodek A."/>
            <person name="Scott J.L."/>
            <person name="Geoghagen N.S.M."/>
            <person name="Weidman J.F."/>
            <person name="Fuhrmann J.L."/>
            <person name="Nguyen D."/>
            <person name="Utterback T.R."/>
            <person name="Kelley J.M."/>
            <person name="Peterson J.D."/>
            <person name="Sadow P.W."/>
            <person name="Hanna M.C."/>
            <person name="Cotton M.D."/>
            <person name="Roberts K.M."/>
            <person name="Hurst M.A."/>
            <person name="Kaine B.P."/>
            <person name="Borodovsky M."/>
            <person name="Klenk H.-P."/>
            <person name="Fraser C.M."/>
            <person name="Smith H.O."/>
            <person name="Woese C.R."/>
            <person name="Venter J.C."/>
        </authorList>
    </citation>
    <scope>NUCLEOTIDE SEQUENCE [LARGE SCALE GENOMIC DNA]</scope>
    <source>
        <strain>ATCC 43067 / DSM 2661 / JAL-1 / JCM 10045 / NBRC 100440</strain>
    </source>
</reference>
<name>THII_METJA</name>
<dbReference type="EC" id="2.8.1.4" evidence="1"/>
<dbReference type="EMBL" id="L77117">
    <property type="protein sequence ID" value="AAB98933.1"/>
    <property type="molecule type" value="Genomic_DNA"/>
</dbReference>
<dbReference type="PIR" id="C64416">
    <property type="entry name" value="C64416"/>
</dbReference>
<dbReference type="SMR" id="Q58341"/>
<dbReference type="FunCoup" id="Q58341">
    <property type="interactions" value="112"/>
</dbReference>
<dbReference type="STRING" id="243232.MJ_0931"/>
<dbReference type="PaxDb" id="243232-MJ_0931"/>
<dbReference type="EnsemblBacteria" id="AAB98933">
    <property type="protein sequence ID" value="AAB98933"/>
    <property type="gene ID" value="MJ_0931"/>
</dbReference>
<dbReference type="KEGG" id="mja:MJ_0931"/>
<dbReference type="eggNOG" id="arCOG00038">
    <property type="taxonomic scope" value="Archaea"/>
</dbReference>
<dbReference type="HOGENOM" id="CLU_037952_4_0_2"/>
<dbReference type="InParanoid" id="Q58341"/>
<dbReference type="PhylomeDB" id="Q58341"/>
<dbReference type="UniPathway" id="UPA00060"/>
<dbReference type="Proteomes" id="UP000000805">
    <property type="component" value="Chromosome"/>
</dbReference>
<dbReference type="GO" id="GO:0005829">
    <property type="term" value="C:cytosol"/>
    <property type="evidence" value="ECO:0000318"/>
    <property type="project" value="GO_Central"/>
</dbReference>
<dbReference type="GO" id="GO:0005524">
    <property type="term" value="F:ATP binding"/>
    <property type="evidence" value="ECO:0007669"/>
    <property type="project" value="UniProtKB-UniRule"/>
</dbReference>
<dbReference type="GO" id="GO:0004810">
    <property type="term" value="F:CCA tRNA nucleotidyltransferase activity"/>
    <property type="evidence" value="ECO:0007669"/>
    <property type="project" value="InterPro"/>
</dbReference>
<dbReference type="GO" id="GO:0000049">
    <property type="term" value="F:tRNA binding"/>
    <property type="evidence" value="ECO:0007669"/>
    <property type="project" value="UniProtKB-UniRule"/>
</dbReference>
<dbReference type="GO" id="GO:0140741">
    <property type="term" value="F:tRNA-uracil-4 sulfurtransferase activity"/>
    <property type="evidence" value="ECO:0007669"/>
    <property type="project" value="UniProtKB-EC"/>
</dbReference>
<dbReference type="GO" id="GO:0009228">
    <property type="term" value="P:thiamine biosynthetic process"/>
    <property type="evidence" value="ECO:0007669"/>
    <property type="project" value="UniProtKB-KW"/>
</dbReference>
<dbReference type="GO" id="GO:0009229">
    <property type="term" value="P:thiamine diphosphate biosynthetic process"/>
    <property type="evidence" value="ECO:0007669"/>
    <property type="project" value="UniProtKB-UniRule"/>
</dbReference>
<dbReference type="GO" id="GO:0052837">
    <property type="term" value="P:thiazole biosynthetic process"/>
    <property type="evidence" value="ECO:0000318"/>
    <property type="project" value="GO_Central"/>
</dbReference>
<dbReference type="GO" id="GO:0002937">
    <property type="term" value="P:tRNA 4-thiouridine biosynthesis"/>
    <property type="evidence" value="ECO:0000318"/>
    <property type="project" value="GO_Central"/>
</dbReference>
<dbReference type="CDD" id="cd01712">
    <property type="entry name" value="PPase_ThiI"/>
    <property type="match status" value="1"/>
</dbReference>
<dbReference type="CDD" id="cd11716">
    <property type="entry name" value="THUMP_ThiI"/>
    <property type="match status" value="1"/>
</dbReference>
<dbReference type="FunFam" id="3.40.50.620:FF:000053">
    <property type="entry name" value="Probable tRNA sulfurtransferase"/>
    <property type="match status" value="1"/>
</dbReference>
<dbReference type="Gene3D" id="3.30.2130.30">
    <property type="match status" value="1"/>
</dbReference>
<dbReference type="Gene3D" id="3.40.50.620">
    <property type="entry name" value="HUPs"/>
    <property type="match status" value="1"/>
</dbReference>
<dbReference type="HAMAP" id="MF_00021">
    <property type="entry name" value="ThiI"/>
    <property type="match status" value="1"/>
</dbReference>
<dbReference type="InterPro" id="IPR014729">
    <property type="entry name" value="Rossmann-like_a/b/a_fold"/>
</dbReference>
<dbReference type="InterPro" id="IPR020536">
    <property type="entry name" value="ThiI_AANH"/>
</dbReference>
<dbReference type="InterPro" id="IPR054173">
    <property type="entry name" value="ThiI_fer"/>
</dbReference>
<dbReference type="InterPro" id="IPR049961">
    <property type="entry name" value="ThiI_N"/>
</dbReference>
<dbReference type="InterPro" id="IPR004114">
    <property type="entry name" value="THUMP_dom"/>
</dbReference>
<dbReference type="InterPro" id="IPR049962">
    <property type="entry name" value="THUMP_ThiI"/>
</dbReference>
<dbReference type="InterPro" id="IPR003720">
    <property type="entry name" value="tRNA_STrfase"/>
</dbReference>
<dbReference type="InterPro" id="IPR050102">
    <property type="entry name" value="tRNA_sulfurtransferase_ThiI"/>
</dbReference>
<dbReference type="NCBIfam" id="TIGR00342">
    <property type="entry name" value="tRNA uracil 4-sulfurtransferase ThiI"/>
    <property type="match status" value="1"/>
</dbReference>
<dbReference type="PANTHER" id="PTHR43209">
    <property type="entry name" value="TRNA SULFURTRANSFERASE"/>
    <property type="match status" value="1"/>
</dbReference>
<dbReference type="PANTHER" id="PTHR43209:SF1">
    <property type="entry name" value="TRNA SULFURTRANSFERASE"/>
    <property type="match status" value="1"/>
</dbReference>
<dbReference type="Pfam" id="PF02568">
    <property type="entry name" value="ThiI"/>
    <property type="match status" value="1"/>
</dbReference>
<dbReference type="Pfam" id="PF22025">
    <property type="entry name" value="ThiI_fer"/>
    <property type="match status" value="1"/>
</dbReference>
<dbReference type="Pfam" id="PF02926">
    <property type="entry name" value="THUMP"/>
    <property type="match status" value="1"/>
</dbReference>
<dbReference type="SMART" id="SM00981">
    <property type="entry name" value="THUMP"/>
    <property type="match status" value="1"/>
</dbReference>
<dbReference type="SUPFAM" id="SSF52402">
    <property type="entry name" value="Adenine nucleotide alpha hydrolases-like"/>
    <property type="match status" value="1"/>
</dbReference>
<dbReference type="SUPFAM" id="SSF143437">
    <property type="entry name" value="THUMP domain-like"/>
    <property type="match status" value="1"/>
</dbReference>
<dbReference type="PROSITE" id="PS51165">
    <property type="entry name" value="THUMP"/>
    <property type="match status" value="1"/>
</dbReference>
<comment type="function">
    <text evidence="1">Catalyzes the ATP-dependent transfer of a sulfur to tRNA to produce 4-thiouridine in position 8 of tRNAs, which functions as a near-UV photosensor. Also catalyzes the transfer of sulfur to the sulfur carrier protein ThiS, forming ThiS-thiocarboxylate. This is a step in the synthesis of thiazole, in the thiamine biosynthesis pathway. The sulfur is donated as persulfide by IscS.</text>
</comment>
<comment type="catalytic activity">
    <reaction evidence="1">
        <text>[ThiI sulfur-carrier protein]-S-sulfanyl-L-cysteine + a uridine in tRNA + 2 reduced [2Fe-2S]-[ferredoxin] + ATP + H(+) = [ThiI sulfur-carrier protein]-L-cysteine + a 4-thiouridine in tRNA + 2 oxidized [2Fe-2S]-[ferredoxin] + AMP + diphosphate</text>
        <dbReference type="Rhea" id="RHEA:24176"/>
        <dbReference type="Rhea" id="RHEA-COMP:10000"/>
        <dbReference type="Rhea" id="RHEA-COMP:10001"/>
        <dbReference type="Rhea" id="RHEA-COMP:13337"/>
        <dbReference type="Rhea" id="RHEA-COMP:13338"/>
        <dbReference type="Rhea" id="RHEA-COMP:13339"/>
        <dbReference type="Rhea" id="RHEA-COMP:13340"/>
        <dbReference type="ChEBI" id="CHEBI:15378"/>
        <dbReference type="ChEBI" id="CHEBI:29950"/>
        <dbReference type="ChEBI" id="CHEBI:30616"/>
        <dbReference type="ChEBI" id="CHEBI:33019"/>
        <dbReference type="ChEBI" id="CHEBI:33737"/>
        <dbReference type="ChEBI" id="CHEBI:33738"/>
        <dbReference type="ChEBI" id="CHEBI:61963"/>
        <dbReference type="ChEBI" id="CHEBI:65315"/>
        <dbReference type="ChEBI" id="CHEBI:136798"/>
        <dbReference type="ChEBI" id="CHEBI:456215"/>
        <dbReference type="EC" id="2.8.1.4"/>
    </reaction>
</comment>
<comment type="catalytic activity">
    <reaction evidence="1">
        <text>[ThiS sulfur-carrier protein]-C-terminal Gly-Gly-AMP + S-sulfanyl-L-cysteinyl-[cysteine desulfurase] + AH2 = [ThiS sulfur-carrier protein]-C-terminal-Gly-aminoethanethioate + L-cysteinyl-[cysteine desulfurase] + A + AMP + 2 H(+)</text>
        <dbReference type="Rhea" id="RHEA:43340"/>
        <dbReference type="Rhea" id="RHEA-COMP:12157"/>
        <dbReference type="Rhea" id="RHEA-COMP:12158"/>
        <dbReference type="Rhea" id="RHEA-COMP:12910"/>
        <dbReference type="Rhea" id="RHEA-COMP:19908"/>
        <dbReference type="ChEBI" id="CHEBI:13193"/>
        <dbReference type="ChEBI" id="CHEBI:15378"/>
        <dbReference type="ChEBI" id="CHEBI:17499"/>
        <dbReference type="ChEBI" id="CHEBI:29950"/>
        <dbReference type="ChEBI" id="CHEBI:61963"/>
        <dbReference type="ChEBI" id="CHEBI:90618"/>
        <dbReference type="ChEBI" id="CHEBI:232372"/>
        <dbReference type="ChEBI" id="CHEBI:456215"/>
    </reaction>
</comment>
<comment type="pathway">
    <text evidence="1">Cofactor biosynthesis; thiamine diphosphate biosynthesis.</text>
</comment>
<comment type="subcellular location">
    <subcellularLocation>
        <location evidence="1">Cytoplasm</location>
    </subcellularLocation>
</comment>
<comment type="similarity">
    <text evidence="1">Belongs to the ThiI family.</text>
</comment>
<gene>
    <name evidence="1" type="primary">thiI</name>
    <name type="ordered locus">MJ0931</name>
</gene>
<proteinExistence type="inferred from homology"/>
<feature type="chain" id="PRO_0000154894" description="Probable tRNA sulfurtransferase">
    <location>
        <begin position="1"/>
        <end position="381"/>
    </location>
</feature>
<feature type="domain" description="THUMP" evidence="1">
    <location>
        <begin position="68"/>
        <end position="176"/>
    </location>
</feature>
<feature type="binding site" evidence="1">
    <location>
        <begin position="194"/>
        <end position="195"/>
    </location>
    <ligand>
        <name>ATP</name>
        <dbReference type="ChEBI" id="CHEBI:30616"/>
    </ligand>
</feature>
<feature type="binding site" evidence="1">
    <location>
        <position position="276"/>
    </location>
    <ligand>
        <name>ATP</name>
        <dbReference type="ChEBI" id="CHEBI:30616"/>
    </ligand>
</feature>
<feature type="binding site" evidence="1">
    <location>
        <position position="298"/>
    </location>
    <ligand>
        <name>ATP</name>
        <dbReference type="ChEBI" id="CHEBI:30616"/>
    </ligand>
</feature>
<feature type="binding site" evidence="1">
    <location>
        <position position="307"/>
    </location>
    <ligand>
        <name>ATP</name>
        <dbReference type="ChEBI" id="CHEBI:30616"/>
    </ligand>
</feature>